<comment type="function">
    <text evidence="2">Produces ATP from ADP in the presence of a proton gradient across the membrane. The alpha chain is a regulatory subunit.</text>
</comment>
<comment type="catalytic activity">
    <reaction evidence="2">
        <text>ATP + H2O + 4 H(+)(in) = ADP + phosphate + 5 H(+)(out)</text>
        <dbReference type="Rhea" id="RHEA:57720"/>
        <dbReference type="ChEBI" id="CHEBI:15377"/>
        <dbReference type="ChEBI" id="CHEBI:15378"/>
        <dbReference type="ChEBI" id="CHEBI:30616"/>
        <dbReference type="ChEBI" id="CHEBI:43474"/>
        <dbReference type="ChEBI" id="CHEBI:456216"/>
        <dbReference type="EC" id="7.1.2.2"/>
    </reaction>
</comment>
<comment type="subunit">
    <text evidence="1">F-type ATPases have 2 components, CF(1) - the catalytic core - and CF(0) - the membrane proton channel. CF(1) has five subunits: alpha(3), beta(3), gamma(1), delta(1), epsilon(1). CF(0) has four main subunits: a(1), b(1), b'(1) and c(9-12) (By similarity).</text>
</comment>
<comment type="subcellular location">
    <subcellularLocation>
        <location evidence="2">Cell inner membrane</location>
        <topology evidence="2">Peripheral membrane protein</topology>
    </subcellularLocation>
</comment>
<comment type="similarity">
    <text evidence="2">Belongs to the ATPase alpha/beta chains family.</text>
</comment>
<reference key="1">
    <citation type="submission" date="2005-09" db="EMBL/GenBank/DDBJ databases">
        <title>Complete sequence of chromosome 1 of Rhodobacter sphaeroides 2.4.1.</title>
        <authorList>
            <person name="Copeland A."/>
            <person name="Lucas S."/>
            <person name="Lapidus A."/>
            <person name="Barry K."/>
            <person name="Detter J.C."/>
            <person name="Glavina T."/>
            <person name="Hammon N."/>
            <person name="Israni S."/>
            <person name="Pitluck S."/>
            <person name="Richardson P."/>
            <person name="Mackenzie C."/>
            <person name="Choudhary M."/>
            <person name="Larimer F."/>
            <person name="Hauser L.J."/>
            <person name="Land M."/>
            <person name="Donohue T.J."/>
            <person name="Kaplan S."/>
        </authorList>
    </citation>
    <scope>NUCLEOTIDE SEQUENCE [LARGE SCALE GENOMIC DNA]</scope>
    <source>
        <strain>ATCC 17023 / DSM 158 / JCM 6121 / CCUG 31486 / LMG 2827 / NBRC 12203 / NCIMB 8253 / ATH 2.4.1.</strain>
    </source>
</reference>
<evidence type="ECO:0000250" key="1"/>
<evidence type="ECO:0000255" key="2">
    <source>
        <dbReference type="HAMAP-Rule" id="MF_01346"/>
    </source>
</evidence>
<sequence length="512" mass="55187">MGIQAAEISAILKEQIKNFGQQAEVAEVGRVLSVGDGIARVHGLDNVQAGEMVEFPGGIRGMALNLEVDNVGVVIFGDDRSIKEGDTVKRTKSIVDVPAGDALLGRVVDGLGNPIDGKGPIAATERRVADVKAPGIIPRKGVHEPMATGLKSVDAMIPIGRGQRELIIGDRQTGKTAIALDTILNQKSYNEAAGDDESKKLYCIYVAIGQKRSTVAQLVKKLEETGAIDYTLVVAATASDPAPMQFLAPYAATAMAEYFRDNGRHALIIYDDLSKQAVAYRQMSLLLRRPPGREAYPGDVFYLHSRLLERSAKLNKDHGAGSLTALPIIETQGGDVSAFIPTNVISITDGQIFLETELFYQGIRPAVNTGLSVSRVGSSAQTDAMKSVAGPVKLELAQYREMAAFAQFGSDLDAATQQLLNRGARLTELMKQPQYAPLTNAEIVCVIFAGTKGYLDKVPVKDVGRWEQGLLKHLRTNAKDLLADITNNDRKVKGELEDKIRAALDTYAKDFA</sequence>
<organism>
    <name type="scientific">Cereibacter sphaeroides (strain ATCC 17023 / DSM 158 / JCM 6121 / CCUG 31486 / LMG 2827 / NBRC 12203 / NCIMB 8253 / ATH 2.4.1.)</name>
    <name type="common">Rhodobacter sphaeroides</name>
    <dbReference type="NCBI Taxonomy" id="272943"/>
    <lineage>
        <taxon>Bacteria</taxon>
        <taxon>Pseudomonadati</taxon>
        <taxon>Pseudomonadota</taxon>
        <taxon>Alphaproteobacteria</taxon>
        <taxon>Rhodobacterales</taxon>
        <taxon>Paracoccaceae</taxon>
        <taxon>Cereibacter</taxon>
    </lineage>
</organism>
<feature type="chain" id="PRO_0000238339" description="ATP synthase subunit alpha">
    <location>
        <begin position="1"/>
        <end position="512"/>
    </location>
</feature>
<feature type="binding site" evidence="2">
    <location>
        <begin position="169"/>
        <end position="176"/>
    </location>
    <ligand>
        <name>ATP</name>
        <dbReference type="ChEBI" id="CHEBI:30616"/>
    </ligand>
</feature>
<feature type="site" description="Required for activity" evidence="2">
    <location>
        <position position="372"/>
    </location>
</feature>
<keyword id="KW-0066">ATP synthesis</keyword>
<keyword id="KW-0067">ATP-binding</keyword>
<keyword id="KW-0997">Cell inner membrane</keyword>
<keyword id="KW-1003">Cell membrane</keyword>
<keyword id="KW-0139">CF(1)</keyword>
<keyword id="KW-0375">Hydrogen ion transport</keyword>
<keyword id="KW-0406">Ion transport</keyword>
<keyword id="KW-0472">Membrane</keyword>
<keyword id="KW-0547">Nucleotide-binding</keyword>
<keyword id="KW-1185">Reference proteome</keyword>
<keyword id="KW-1278">Translocase</keyword>
<keyword id="KW-0813">Transport</keyword>
<gene>
    <name evidence="2" type="primary">atpA</name>
    <name type="ordered locus">RHOS4_08830</name>
    <name type="ORF">RSP_2297</name>
</gene>
<dbReference type="EC" id="7.1.2.2" evidence="2"/>
<dbReference type="EMBL" id="CP000143">
    <property type="protein sequence ID" value="ABA78451.1"/>
    <property type="molecule type" value="Genomic_DNA"/>
</dbReference>
<dbReference type="RefSeq" id="WP_002719460.1">
    <property type="nucleotide sequence ID" value="NZ_CP030271.1"/>
</dbReference>
<dbReference type="RefSeq" id="YP_352352.1">
    <property type="nucleotide sequence ID" value="NC_007493.2"/>
</dbReference>
<dbReference type="SMR" id="Q3J433"/>
<dbReference type="STRING" id="272943.RSP_2297"/>
<dbReference type="EnsemblBacteria" id="ABA78451">
    <property type="protein sequence ID" value="ABA78451"/>
    <property type="gene ID" value="RSP_2297"/>
</dbReference>
<dbReference type="GeneID" id="67446068"/>
<dbReference type="KEGG" id="rsp:RSP_2297"/>
<dbReference type="PATRIC" id="fig|272943.9.peg.1208"/>
<dbReference type="eggNOG" id="COG0056">
    <property type="taxonomic scope" value="Bacteria"/>
</dbReference>
<dbReference type="OrthoDB" id="9803053at2"/>
<dbReference type="PhylomeDB" id="Q3J433"/>
<dbReference type="Proteomes" id="UP000002703">
    <property type="component" value="Chromosome 1"/>
</dbReference>
<dbReference type="GO" id="GO:0005886">
    <property type="term" value="C:plasma membrane"/>
    <property type="evidence" value="ECO:0007669"/>
    <property type="project" value="UniProtKB-SubCell"/>
</dbReference>
<dbReference type="GO" id="GO:0045259">
    <property type="term" value="C:proton-transporting ATP synthase complex"/>
    <property type="evidence" value="ECO:0007669"/>
    <property type="project" value="UniProtKB-KW"/>
</dbReference>
<dbReference type="GO" id="GO:0043531">
    <property type="term" value="F:ADP binding"/>
    <property type="evidence" value="ECO:0007669"/>
    <property type="project" value="TreeGrafter"/>
</dbReference>
<dbReference type="GO" id="GO:0005524">
    <property type="term" value="F:ATP binding"/>
    <property type="evidence" value="ECO:0007669"/>
    <property type="project" value="UniProtKB-UniRule"/>
</dbReference>
<dbReference type="GO" id="GO:0046933">
    <property type="term" value="F:proton-transporting ATP synthase activity, rotational mechanism"/>
    <property type="evidence" value="ECO:0007669"/>
    <property type="project" value="UniProtKB-UniRule"/>
</dbReference>
<dbReference type="CDD" id="cd18113">
    <property type="entry name" value="ATP-synt_F1_alpha_C"/>
    <property type="match status" value="1"/>
</dbReference>
<dbReference type="CDD" id="cd18116">
    <property type="entry name" value="ATP-synt_F1_alpha_N"/>
    <property type="match status" value="1"/>
</dbReference>
<dbReference type="CDD" id="cd01132">
    <property type="entry name" value="F1-ATPase_alpha_CD"/>
    <property type="match status" value="1"/>
</dbReference>
<dbReference type="FunFam" id="1.20.150.20:FF:000001">
    <property type="entry name" value="ATP synthase subunit alpha"/>
    <property type="match status" value="1"/>
</dbReference>
<dbReference type="FunFam" id="2.40.30.20:FF:000001">
    <property type="entry name" value="ATP synthase subunit alpha"/>
    <property type="match status" value="1"/>
</dbReference>
<dbReference type="FunFam" id="3.40.50.300:FF:002432">
    <property type="entry name" value="ATP synthase subunit alpha, mitochondrial"/>
    <property type="match status" value="1"/>
</dbReference>
<dbReference type="Gene3D" id="2.40.30.20">
    <property type="match status" value="1"/>
</dbReference>
<dbReference type="Gene3D" id="1.20.150.20">
    <property type="entry name" value="ATP synthase alpha/beta chain, C-terminal domain"/>
    <property type="match status" value="1"/>
</dbReference>
<dbReference type="Gene3D" id="3.40.50.300">
    <property type="entry name" value="P-loop containing nucleotide triphosphate hydrolases"/>
    <property type="match status" value="1"/>
</dbReference>
<dbReference type="HAMAP" id="MF_01346">
    <property type="entry name" value="ATP_synth_alpha_bact"/>
    <property type="match status" value="1"/>
</dbReference>
<dbReference type="InterPro" id="IPR023366">
    <property type="entry name" value="ATP_synth_asu-like_sf"/>
</dbReference>
<dbReference type="InterPro" id="IPR000793">
    <property type="entry name" value="ATP_synth_asu_C"/>
</dbReference>
<dbReference type="InterPro" id="IPR038376">
    <property type="entry name" value="ATP_synth_asu_C_sf"/>
</dbReference>
<dbReference type="InterPro" id="IPR033732">
    <property type="entry name" value="ATP_synth_F1_a_nt-bd_dom"/>
</dbReference>
<dbReference type="InterPro" id="IPR005294">
    <property type="entry name" value="ATP_synth_F1_asu"/>
</dbReference>
<dbReference type="InterPro" id="IPR020003">
    <property type="entry name" value="ATPase_a/bsu_AS"/>
</dbReference>
<dbReference type="InterPro" id="IPR004100">
    <property type="entry name" value="ATPase_F1/V1/A1_a/bsu_N"/>
</dbReference>
<dbReference type="InterPro" id="IPR036121">
    <property type="entry name" value="ATPase_F1/V1/A1_a/bsu_N_sf"/>
</dbReference>
<dbReference type="InterPro" id="IPR000194">
    <property type="entry name" value="ATPase_F1/V1/A1_a/bsu_nucl-bd"/>
</dbReference>
<dbReference type="InterPro" id="IPR027417">
    <property type="entry name" value="P-loop_NTPase"/>
</dbReference>
<dbReference type="NCBIfam" id="TIGR00962">
    <property type="entry name" value="atpA"/>
    <property type="match status" value="1"/>
</dbReference>
<dbReference type="NCBIfam" id="NF009884">
    <property type="entry name" value="PRK13343.1"/>
    <property type="match status" value="1"/>
</dbReference>
<dbReference type="PANTHER" id="PTHR48082">
    <property type="entry name" value="ATP SYNTHASE SUBUNIT ALPHA, MITOCHONDRIAL"/>
    <property type="match status" value="1"/>
</dbReference>
<dbReference type="PANTHER" id="PTHR48082:SF2">
    <property type="entry name" value="ATP SYNTHASE SUBUNIT ALPHA, MITOCHONDRIAL"/>
    <property type="match status" value="1"/>
</dbReference>
<dbReference type="Pfam" id="PF00006">
    <property type="entry name" value="ATP-synt_ab"/>
    <property type="match status" value="1"/>
</dbReference>
<dbReference type="Pfam" id="PF00306">
    <property type="entry name" value="ATP-synt_ab_C"/>
    <property type="match status" value="1"/>
</dbReference>
<dbReference type="Pfam" id="PF02874">
    <property type="entry name" value="ATP-synt_ab_N"/>
    <property type="match status" value="1"/>
</dbReference>
<dbReference type="PIRSF" id="PIRSF039088">
    <property type="entry name" value="F_ATPase_subunit_alpha"/>
    <property type="match status" value="1"/>
</dbReference>
<dbReference type="SUPFAM" id="SSF47917">
    <property type="entry name" value="C-terminal domain of alpha and beta subunits of F1 ATP synthase"/>
    <property type="match status" value="1"/>
</dbReference>
<dbReference type="SUPFAM" id="SSF50615">
    <property type="entry name" value="N-terminal domain of alpha and beta subunits of F1 ATP synthase"/>
    <property type="match status" value="1"/>
</dbReference>
<dbReference type="SUPFAM" id="SSF52540">
    <property type="entry name" value="P-loop containing nucleoside triphosphate hydrolases"/>
    <property type="match status" value="1"/>
</dbReference>
<dbReference type="PROSITE" id="PS00152">
    <property type="entry name" value="ATPASE_ALPHA_BETA"/>
    <property type="match status" value="1"/>
</dbReference>
<protein>
    <recommendedName>
        <fullName evidence="2">ATP synthase subunit alpha</fullName>
        <ecNumber evidence="2">7.1.2.2</ecNumber>
    </recommendedName>
    <alternativeName>
        <fullName evidence="2">ATP synthase F1 sector subunit alpha</fullName>
    </alternativeName>
    <alternativeName>
        <fullName evidence="2">F-ATPase subunit alpha</fullName>
    </alternativeName>
</protein>
<accession>Q3J433</accession>
<name>ATPA_CERS4</name>
<proteinExistence type="inferred from homology"/>